<reference key="1">
    <citation type="journal article" date="2007" name="Science">
        <title>The Calyptogena magnifica chemoautotrophic symbiont genome.</title>
        <authorList>
            <person name="Newton I.L.G."/>
            <person name="Woyke T."/>
            <person name="Auchtung T.A."/>
            <person name="Dilly G.F."/>
            <person name="Dutton R.J."/>
            <person name="Fisher M.C."/>
            <person name="Fontanez K.M."/>
            <person name="Lau E."/>
            <person name="Stewart F.J."/>
            <person name="Richardson P.M."/>
            <person name="Barry K.W."/>
            <person name="Saunders E."/>
            <person name="Detter J.C."/>
            <person name="Wu D."/>
            <person name="Eisen J.A."/>
            <person name="Cavanaugh C.M."/>
        </authorList>
    </citation>
    <scope>NUCLEOTIDE SEQUENCE [LARGE SCALE GENOMIC DNA]</scope>
</reference>
<gene>
    <name evidence="1" type="primary">queF</name>
    <name type="ordered locus">Rmag_0479</name>
</gene>
<name>QUEF_RUTMC</name>
<keyword id="KW-0963">Cytoplasm</keyword>
<keyword id="KW-0521">NADP</keyword>
<keyword id="KW-0560">Oxidoreductase</keyword>
<keyword id="KW-0671">Queuosine biosynthesis</keyword>
<evidence type="ECO:0000255" key="1">
    <source>
        <dbReference type="HAMAP-Rule" id="MF_00818"/>
    </source>
</evidence>
<organism>
    <name type="scientific">Ruthia magnifica subsp. Calyptogena magnifica</name>
    <dbReference type="NCBI Taxonomy" id="413404"/>
    <lineage>
        <taxon>Bacteria</taxon>
        <taxon>Pseudomonadati</taxon>
        <taxon>Pseudomonadota</taxon>
        <taxon>Gammaproteobacteria</taxon>
        <taxon>Candidatus Pseudothioglobaceae</taxon>
        <taxon>Candidatus Ruthturnera</taxon>
    </lineage>
</organism>
<protein>
    <recommendedName>
        <fullName evidence="1">NADPH-dependent 7-cyano-7-deazaguanine reductase</fullName>
        <ecNumber evidence="1">1.7.1.13</ecNumber>
    </recommendedName>
    <alternativeName>
        <fullName evidence="1">7-cyano-7-carbaguanine reductase</fullName>
    </alternativeName>
    <alternativeName>
        <fullName evidence="1">NADPH-dependent nitrile oxidoreductase</fullName>
    </alternativeName>
    <alternativeName>
        <fullName evidence="1">PreQ(0) reductase</fullName>
    </alternativeName>
</protein>
<dbReference type="EC" id="1.7.1.13" evidence="1"/>
<dbReference type="EMBL" id="CP000488">
    <property type="protein sequence ID" value="ABL02235.1"/>
    <property type="molecule type" value="Genomic_DNA"/>
</dbReference>
<dbReference type="RefSeq" id="WP_011737860.1">
    <property type="nucleotide sequence ID" value="NC_008610.1"/>
</dbReference>
<dbReference type="SMR" id="A1AWC8"/>
<dbReference type="STRING" id="413404.Rmag_0479"/>
<dbReference type="KEGG" id="rma:Rmag_0479"/>
<dbReference type="eggNOG" id="COG0780">
    <property type="taxonomic scope" value="Bacteria"/>
</dbReference>
<dbReference type="HOGENOM" id="CLU_102489_1_0_6"/>
<dbReference type="OrthoDB" id="9789995at2"/>
<dbReference type="UniPathway" id="UPA00392"/>
<dbReference type="Proteomes" id="UP000002587">
    <property type="component" value="Chromosome"/>
</dbReference>
<dbReference type="GO" id="GO:0005737">
    <property type="term" value="C:cytoplasm"/>
    <property type="evidence" value="ECO:0007669"/>
    <property type="project" value="UniProtKB-SubCell"/>
</dbReference>
<dbReference type="GO" id="GO:0033739">
    <property type="term" value="F:preQ1 synthase activity"/>
    <property type="evidence" value="ECO:0007669"/>
    <property type="project" value="UniProtKB-UniRule"/>
</dbReference>
<dbReference type="GO" id="GO:0008616">
    <property type="term" value="P:queuosine biosynthetic process"/>
    <property type="evidence" value="ECO:0007669"/>
    <property type="project" value="UniProtKB-UniRule"/>
</dbReference>
<dbReference type="GO" id="GO:0006400">
    <property type="term" value="P:tRNA modification"/>
    <property type="evidence" value="ECO:0007669"/>
    <property type="project" value="UniProtKB-UniRule"/>
</dbReference>
<dbReference type="Gene3D" id="3.30.1130.10">
    <property type="match status" value="1"/>
</dbReference>
<dbReference type="HAMAP" id="MF_00818">
    <property type="entry name" value="QueF_type1"/>
    <property type="match status" value="1"/>
</dbReference>
<dbReference type="InterPro" id="IPR043133">
    <property type="entry name" value="GTP-CH-I_C/QueF"/>
</dbReference>
<dbReference type="InterPro" id="IPR050084">
    <property type="entry name" value="NADPH_dep_7-cyano-7-deazaG_red"/>
</dbReference>
<dbReference type="InterPro" id="IPR029500">
    <property type="entry name" value="QueF"/>
</dbReference>
<dbReference type="InterPro" id="IPR016856">
    <property type="entry name" value="QueF_type1"/>
</dbReference>
<dbReference type="NCBIfam" id="TIGR03139">
    <property type="entry name" value="QueF-II"/>
    <property type="match status" value="1"/>
</dbReference>
<dbReference type="PANTHER" id="PTHR34354">
    <property type="entry name" value="NADPH-DEPENDENT 7-CYANO-7-DEAZAGUANINE REDUCTASE"/>
    <property type="match status" value="1"/>
</dbReference>
<dbReference type="PANTHER" id="PTHR34354:SF1">
    <property type="entry name" value="NADPH-DEPENDENT 7-CYANO-7-DEAZAGUANINE REDUCTASE"/>
    <property type="match status" value="1"/>
</dbReference>
<dbReference type="Pfam" id="PF14489">
    <property type="entry name" value="QueF"/>
    <property type="match status" value="1"/>
</dbReference>
<dbReference type="PIRSF" id="PIRSF027377">
    <property type="entry name" value="Nitrile_oxidored_QueF"/>
    <property type="match status" value="1"/>
</dbReference>
<dbReference type="SUPFAM" id="SSF55620">
    <property type="entry name" value="Tetrahydrobiopterin biosynthesis enzymes-like"/>
    <property type="match status" value="1"/>
</dbReference>
<comment type="function">
    <text evidence="1">Catalyzes the NADPH-dependent reduction of 7-cyano-7-deazaguanine (preQ0) to 7-aminomethyl-7-deazaguanine (preQ1).</text>
</comment>
<comment type="catalytic activity">
    <reaction evidence="1">
        <text>7-aminomethyl-7-carbaguanine + 2 NADP(+) = 7-cyano-7-deazaguanine + 2 NADPH + 3 H(+)</text>
        <dbReference type="Rhea" id="RHEA:13409"/>
        <dbReference type="ChEBI" id="CHEBI:15378"/>
        <dbReference type="ChEBI" id="CHEBI:45075"/>
        <dbReference type="ChEBI" id="CHEBI:57783"/>
        <dbReference type="ChEBI" id="CHEBI:58349"/>
        <dbReference type="ChEBI" id="CHEBI:58703"/>
        <dbReference type="EC" id="1.7.1.13"/>
    </reaction>
</comment>
<comment type="pathway">
    <text evidence="1">tRNA modification; tRNA-queuosine biosynthesis.</text>
</comment>
<comment type="subcellular location">
    <subcellularLocation>
        <location evidence="1">Cytoplasm</location>
    </subcellularLocation>
</comment>
<comment type="similarity">
    <text evidence="1">Belongs to the GTP cyclohydrolase I family. QueF type 1 subfamily.</text>
</comment>
<feature type="chain" id="PRO_1000062408" description="NADPH-dependent 7-cyano-7-deazaguanine reductase">
    <location>
        <begin position="1"/>
        <end position="128"/>
    </location>
</feature>
<feature type="active site" description="Thioimide intermediate" evidence="1">
    <location>
        <position position="34"/>
    </location>
</feature>
<feature type="active site" description="Proton donor" evidence="1">
    <location>
        <position position="41"/>
    </location>
</feature>
<feature type="binding site" evidence="1">
    <location>
        <begin position="56"/>
        <end position="58"/>
    </location>
    <ligand>
        <name>substrate</name>
    </ligand>
</feature>
<feature type="binding site" evidence="1">
    <location>
        <begin position="75"/>
        <end position="76"/>
    </location>
    <ligand>
        <name>substrate</name>
    </ligand>
</feature>
<sequence length="128" mass="14923">MSYQPNKVLEVFDNPKIERDFIIQINMPEFTCLCPKTGQPDFATLHFAYIADKACIELKSLKMYIWLYRNEGAFHEAVTNQILDDLVQVSNPRFIRLKAIFNIRGGVYTTIITEHKQKNWTPKAKVDL</sequence>
<accession>A1AWC8</accession>
<proteinExistence type="inferred from homology"/>